<comment type="function">
    <text evidence="1">Converts GTP to 7,8-dihydro-D-neopterin 2',3'-cyclic phosphate, the first intermediate in the biosynthesis of coenzyme methanopterin.</text>
</comment>
<comment type="catalytic activity">
    <reaction evidence="1">
        <text>GTP + H2O = 7,8-dihydroneopterin 2',3'-cyclic phosphate + formate + diphosphate + H(+)</text>
        <dbReference type="Rhea" id="RHEA:25860"/>
        <dbReference type="ChEBI" id="CHEBI:15377"/>
        <dbReference type="ChEBI" id="CHEBI:15378"/>
        <dbReference type="ChEBI" id="CHEBI:15740"/>
        <dbReference type="ChEBI" id="CHEBI:33019"/>
        <dbReference type="ChEBI" id="CHEBI:37565"/>
        <dbReference type="ChEBI" id="CHEBI:58854"/>
        <dbReference type="EC" id="3.5.4.39"/>
    </reaction>
</comment>
<comment type="cofactor">
    <cofactor evidence="1">
        <name>Fe(2+)</name>
        <dbReference type="ChEBI" id="CHEBI:29033"/>
    </cofactor>
    <text evidence="1">Binds 1 Fe(2+) ion per subunit.</text>
</comment>
<comment type="pathway">
    <text evidence="1">Cofactor biosynthesis; 5,6,7,8-tetrahydromethanopterin biosynthesis.</text>
</comment>
<comment type="subunit">
    <text evidence="1">Homodimer.</text>
</comment>
<comment type="similarity">
    <text evidence="1">Belongs to the GTP cyclohydrolase IV family.</text>
</comment>
<name>MPTA_METVS</name>
<organism>
    <name type="scientific">Methanococcus vannielii (strain ATCC 35089 / DSM 1224 / JCM 13029 / OCM 148 / SB)</name>
    <dbReference type="NCBI Taxonomy" id="406327"/>
    <lineage>
        <taxon>Archaea</taxon>
        <taxon>Methanobacteriati</taxon>
        <taxon>Methanobacteriota</taxon>
        <taxon>Methanomada group</taxon>
        <taxon>Methanococci</taxon>
        <taxon>Methanococcales</taxon>
        <taxon>Methanococcaceae</taxon>
        <taxon>Methanococcus</taxon>
    </lineage>
</organism>
<keyword id="KW-0378">Hydrolase</keyword>
<keyword id="KW-0408">Iron</keyword>
<keyword id="KW-0479">Metal-binding</keyword>
<gene>
    <name evidence="1" type="primary">mptA</name>
    <name type="ordered locus">Mevan_1031</name>
</gene>
<protein>
    <recommendedName>
        <fullName evidence="1">GTP cyclohydrolase MptA</fullName>
        <ecNumber evidence="1">3.5.4.39</ecNumber>
    </recommendedName>
    <alternativeName>
        <fullName evidence="1">GTP cyclohydrolase IV</fullName>
    </alternativeName>
</protein>
<reference key="1">
    <citation type="submission" date="2007-06" db="EMBL/GenBank/DDBJ databases">
        <title>Complete sequence of Methanococcus vannielii SB.</title>
        <authorList>
            <consortium name="US DOE Joint Genome Institute"/>
            <person name="Copeland A."/>
            <person name="Lucas S."/>
            <person name="Lapidus A."/>
            <person name="Barry K."/>
            <person name="Glavina del Rio T."/>
            <person name="Dalin E."/>
            <person name="Tice H."/>
            <person name="Pitluck S."/>
            <person name="Chain P."/>
            <person name="Malfatti S."/>
            <person name="Shin M."/>
            <person name="Vergez L."/>
            <person name="Schmutz J."/>
            <person name="Larimer F."/>
            <person name="Land M."/>
            <person name="Hauser L."/>
            <person name="Kyrpides N."/>
            <person name="Anderson I."/>
            <person name="Sieprawska-Lupa M."/>
            <person name="Whitman W.B."/>
            <person name="Richardson P."/>
        </authorList>
    </citation>
    <scope>NUCLEOTIDE SEQUENCE [LARGE SCALE GENOMIC DNA]</scope>
    <source>
        <strain>ATCC 35089 / DSM 1224 / JCM 13029 / OCM 148 / SB</strain>
    </source>
</reference>
<accession>A6UR12</accession>
<feature type="chain" id="PRO_1000068668" description="GTP cyclohydrolase MptA">
    <location>
        <begin position="1"/>
        <end position="312"/>
    </location>
</feature>
<feature type="site" description="May be catalytically important" evidence="1">
    <location>
        <position position="161"/>
    </location>
</feature>
<proteinExistence type="inferred from homology"/>
<sequence>MQCSDVQATEPDIKVSLTRVGVTNLKKLVKIKRKSKRDIVLLPTFEVYVDLPSSQKGIHMSRSPEVIEEVVENIIVEKEIYGVEELSVEIVMKLFEKHEYATRAEVMLYSDYMMEEKSPVTKKDSQEVGKIMARAYGVKDDSGMISVKKMVGAEVVGITACPCAQNLLKENAINKLIEKGFSNEDIEKILDSVTIATHNQRGIGTIMIEVPNGYTVGISKIIKIIKESMSGEVYELLKRSDEAYVVELAHKNPKFVEDCAREMIKRVVEVFDYLPEDTQVIVRQVNKESIHRHDAFAERKSKMGELRDELEI</sequence>
<evidence type="ECO:0000255" key="1">
    <source>
        <dbReference type="HAMAP-Rule" id="MF_01527"/>
    </source>
</evidence>
<dbReference type="EC" id="3.5.4.39" evidence="1"/>
<dbReference type="EMBL" id="CP000742">
    <property type="protein sequence ID" value="ABR54934.1"/>
    <property type="molecule type" value="Genomic_DNA"/>
</dbReference>
<dbReference type="RefSeq" id="WP_012065863.1">
    <property type="nucleotide sequence ID" value="NC_009634.1"/>
</dbReference>
<dbReference type="SMR" id="A6UR12"/>
<dbReference type="STRING" id="406327.Mevan_1031"/>
<dbReference type="GeneID" id="5325493"/>
<dbReference type="KEGG" id="mvn:Mevan_1031"/>
<dbReference type="eggNOG" id="arCOG04301">
    <property type="taxonomic scope" value="Archaea"/>
</dbReference>
<dbReference type="HOGENOM" id="CLU_062816_1_0_2"/>
<dbReference type="OrthoDB" id="53087at2157"/>
<dbReference type="UniPathway" id="UPA00065"/>
<dbReference type="Proteomes" id="UP000001107">
    <property type="component" value="Chromosome"/>
</dbReference>
<dbReference type="GO" id="GO:0003934">
    <property type="term" value="F:GTP cyclohydrolase I activity"/>
    <property type="evidence" value="ECO:0007669"/>
    <property type="project" value="InterPro"/>
</dbReference>
<dbReference type="GO" id="GO:0044682">
    <property type="term" value="F:GTP cyclohydrolase IV activity"/>
    <property type="evidence" value="ECO:0007669"/>
    <property type="project" value="UniProtKB-UniRule"/>
</dbReference>
<dbReference type="GO" id="GO:0005506">
    <property type="term" value="F:iron ion binding"/>
    <property type="evidence" value="ECO:0007669"/>
    <property type="project" value="UniProtKB-UniRule"/>
</dbReference>
<dbReference type="GO" id="GO:2001118">
    <property type="term" value="P:tetrahydromethanopterin biosynthetic process"/>
    <property type="evidence" value="ECO:0007669"/>
    <property type="project" value="UniProtKB-UniRule"/>
</dbReference>
<dbReference type="Gene3D" id="3.10.270.10">
    <property type="entry name" value="Urate Oxidase"/>
    <property type="match status" value="1"/>
</dbReference>
<dbReference type="HAMAP" id="MF_01527_A">
    <property type="entry name" value="GTP_cyclohydrol_A"/>
    <property type="match status" value="1"/>
</dbReference>
<dbReference type="InterPro" id="IPR003801">
    <property type="entry name" value="GTP_cyclohydrolase_FolE2/MptA"/>
</dbReference>
<dbReference type="InterPro" id="IPR022840">
    <property type="entry name" value="GTP_cyclohydrolase_MptA"/>
</dbReference>
<dbReference type="NCBIfam" id="TIGR00294">
    <property type="entry name" value="GTP cyclohydrolase MptA"/>
    <property type="match status" value="1"/>
</dbReference>
<dbReference type="PANTHER" id="PTHR36445">
    <property type="entry name" value="GTP CYCLOHYDROLASE MPTA"/>
    <property type="match status" value="1"/>
</dbReference>
<dbReference type="PANTHER" id="PTHR36445:SF1">
    <property type="entry name" value="GTP CYCLOHYDROLASE MPTA"/>
    <property type="match status" value="1"/>
</dbReference>
<dbReference type="Pfam" id="PF02649">
    <property type="entry name" value="GCHY-1"/>
    <property type="match status" value="1"/>
</dbReference>